<organism>
    <name type="scientific">Corynebacterium jeikeium (strain K411)</name>
    <dbReference type="NCBI Taxonomy" id="306537"/>
    <lineage>
        <taxon>Bacteria</taxon>
        <taxon>Bacillati</taxon>
        <taxon>Actinomycetota</taxon>
        <taxon>Actinomycetes</taxon>
        <taxon>Mycobacteriales</taxon>
        <taxon>Corynebacteriaceae</taxon>
        <taxon>Corynebacterium</taxon>
    </lineage>
</organism>
<proteinExistence type="inferred from homology"/>
<reference key="1">
    <citation type="journal article" date="2005" name="J. Bacteriol.">
        <title>Complete genome sequence and analysis of the multiresistant nosocomial pathogen Corynebacterium jeikeium K411, a lipid-requiring bacterium of the human skin flora.</title>
        <authorList>
            <person name="Tauch A."/>
            <person name="Kaiser O."/>
            <person name="Hain T."/>
            <person name="Goesmann A."/>
            <person name="Weisshaar B."/>
            <person name="Albersmeier A."/>
            <person name="Bekel T."/>
            <person name="Bischoff N."/>
            <person name="Brune I."/>
            <person name="Chakraborty T."/>
            <person name="Kalinowski J."/>
            <person name="Meyer F."/>
            <person name="Rupp O."/>
            <person name="Schneiker S."/>
            <person name="Viehoever P."/>
            <person name="Puehler A."/>
        </authorList>
    </citation>
    <scope>NUCLEOTIDE SEQUENCE [LARGE SCALE GENOMIC DNA]</scope>
    <source>
        <strain>K411</strain>
    </source>
</reference>
<protein>
    <recommendedName>
        <fullName evidence="1">Small ribosomal subunit protein bS18</fullName>
    </recommendedName>
    <alternativeName>
        <fullName evidence="3">30S ribosomal protein S18</fullName>
    </alternativeName>
</protein>
<keyword id="KW-1185">Reference proteome</keyword>
<keyword id="KW-0687">Ribonucleoprotein</keyword>
<keyword id="KW-0689">Ribosomal protein</keyword>
<keyword id="KW-0694">RNA-binding</keyword>
<keyword id="KW-0699">rRNA-binding</keyword>
<evidence type="ECO:0000255" key="1">
    <source>
        <dbReference type="HAMAP-Rule" id="MF_00270"/>
    </source>
</evidence>
<evidence type="ECO:0000256" key="2">
    <source>
        <dbReference type="SAM" id="MobiDB-lite"/>
    </source>
</evidence>
<evidence type="ECO:0000305" key="3"/>
<gene>
    <name evidence="1" type="primary">rpsR</name>
    <name type="ordered locus">jk1538</name>
</gene>
<feature type="chain" id="PRO_1000003492" description="Small ribosomal subunit protein bS18">
    <location>
        <begin position="1"/>
        <end position="82"/>
    </location>
</feature>
<feature type="region of interest" description="Disordered" evidence="2">
    <location>
        <begin position="1"/>
        <end position="24"/>
    </location>
</feature>
<accession>Q4JTZ6</accession>
<comment type="function">
    <text evidence="1">Binds as a heterodimer with protein bS6 to the central domain of the 16S rRNA, where it helps stabilize the platform of the 30S subunit.</text>
</comment>
<comment type="subunit">
    <text evidence="1">Part of the 30S ribosomal subunit. Forms a tight heterodimer with protein bS6.</text>
</comment>
<comment type="similarity">
    <text evidence="1">Belongs to the bacterial ribosomal protein bS18 family.</text>
</comment>
<dbReference type="EMBL" id="CR931997">
    <property type="protein sequence ID" value="CAI37711.1"/>
    <property type="molecule type" value="Genomic_DNA"/>
</dbReference>
<dbReference type="RefSeq" id="WP_005293672.1">
    <property type="nucleotide sequence ID" value="NC_007164.1"/>
</dbReference>
<dbReference type="SMR" id="Q4JTZ6"/>
<dbReference type="STRING" id="306537.jk1538"/>
<dbReference type="GeneID" id="92739176"/>
<dbReference type="KEGG" id="cjk:jk1538"/>
<dbReference type="eggNOG" id="COG0238">
    <property type="taxonomic scope" value="Bacteria"/>
</dbReference>
<dbReference type="HOGENOM" id="CLU_148710_1_0_11"/>
<dbReference type="OrthoDB" id="9812008at2"/>
<dbReference type="Proteomes" id="UP000000545">
    <property type="component" value="Chromosome"/>
</dbReference>
<dbReference type="GO" id="GO:0022627">
    <property type="term" value="C:cytosolic small ribosomal subunit"/>
    <property type="evidence" value="ECO:0007669"/>
    <property type="project" value="TreeGrafter"/>
</dbReference>
<dbReference type="GO" id="GO:0070181">
    <property type="term" value="F:small ribosomal subunit rRNA binding"/>
    <property type="evidence" value="ECO:0007669"/>
    <property type="project" value="TreeGrafter"/>
</dbReference>
<dbReference type="GO" id="GO:0003735">
    <property type="term" value="F:structural constituent of ribosome"/>
    <property type="evidence" value="ECO:0007669"/>
    <property type="project" value="InterPro"/>
</dbReference>
<dbReference type="GO" id="GO:0006412">
    <property type="term" value="P:translation"/>
    <property type="evidence" value="ECO:0007669"/>
    <property type="project" value="UniProtKB-UniRule"/>
</dbReference>
<dbReference type="FunFam" id="4.10.640.10:FF:000016">
    <property type="entry name" value="30S ribosomal protein S18"/>
    <property type="match status" value="1"/>
</dbReference>
<dbReference type="Gene3D" id="4.10.640.10">
    <property type="entry name" value="Ribosomal protein S18"/>
    <property type="match status" value="1"/>
</dbReference>
<dbReference type="HAMAP" id="MF_00270">
    <property type="entry name" value="Ribosomal_bS18"/>
    <property type="match status" value="1"/>
</dbReference>
<dbReference type="InterPro" id="IPR001648">
    <property type="entry name" value="Ribosomal_bS18"/>
</dbReference>
<dbReference type="InterPro" id="IPR036870">
    <property type="entry name" value="Ribosomal_bS18_sf"/>
</dbReference>
<dbReference type="NCBIfam" id="TIGR00165">
    <property type="entry name" value="S18"/>
    <property type="match status" value="1"/>
</dbReference>
<dbReference type="PANTHER" id="PTHR13479">
    <property type="entry name" value="30S RIBOSOMAL PROTEIN S18"/>
    <property type="match status" value="1"/>
</dbReference>
<dbReference type="PANTHER" id="PTHR13479:SF40">
    <property type="entry name" value="SMALL RIBOSOMAL SUBUNIT PROTEIN BS18M"/>
    <property type="match status" value="1"/>
</dbReference>
<dbReference type="Pfam" id="PF01084">
    <property type="entry name" value="Ribosomal_S18"/>
    <property type="match status" value="1"/>
</dbReference>
<dbReference type="PRINTS" id="PR00974">
    <property type="entry name" value="RIBOSOMALS18"/>
</dbReference>
<dbReference type="SUPFAM" id="SSF46911">
    <property type="entry name" value="Ribosomal protein S18"/>
    <property type="match status" value="1"/>
</dbReference>
<sequence>MKRTNMKKARMEQSRRPKKNPLKAEGIETVDYKNYDLLRKFISERGKIRSRRVTGLTPQQQRQVATAVKNAREMALLPFHSR</sequence>
<name>RS18_CORJK</name>